<dbReference type="EC" id="2.6.1.9" evidence="1"/>
<dbReference type="EMBL" id="AM408590">
    <property type="protein sequence ID" value="CAL71625.1"/>
    <property type="molecule type" value="Genomic_DNA"/>
</dbReference>
<dbReference type="RefSeq" id="WP_003407947.1">
    <property type="nucleotide sequence ID" value="NC_008769.1"/>
</dbReference>
<dbReference type="SMR" id="A1KJ16"/>
<dbReference type="KEGG" id="mbb:BCG_1638"/>
<dbReference type="HOGENOM" id="CLU_017584_3_1_11"/>
<dbReference type="UniPathway" id="UPA00031">
    <property type="reaction ID" value="UER00012"/>
</dbReference>
<dbReference type="Proteomes" id="UP000001472">
    <property type="component" value="Chromosome"/>
</dbReference>
<dbReference type="GO" id="GO:0004400">
    <property type="term" value="F:histidinol-phosphate transaminase activity"/>
    <property type="evidence" value="ECO:0007669"/>
    <property type="project" value="UniProtKB-UniRule"/>
</dbReference>
<dbReference type="GO" id="GO:0030170">
    <property type="term" value="F:pyridoxal phosphate binding"/>
    <property type="evidence" value="ECO:0007669"/>
    <property type="project" value="InterPro"/>
</dbReference>
<dbReference type="GO" id="GO:0000105">
    <property type="term" value="P:L-histidine biosynthetic process"/>
    <property type="evidence" value="ECO:0007669"/>
    <property type="project" value="UniProtKB-UniRule"/>
</dbReference>
<dbReference type="CDD" id="cd00609">
    <property type="entry name" value="AAT_like"/>
    <property type="match status" value="1"/>
</dbReference>
<dbReference type="FunFam" id="3.40.640.10:FF:000138">
    <property type="entry name" value="Histidinol-phosphate aminotransferase"/>
    <property type="match status" value="1"/>
</dbReference>
<dbReference type="Gene3D" id="3.90.1150.10">
    <property type="entry name" value="Aspartate Aminotransferase, domain 1"/>
    <property type="match status" value="1"/>
</dbReference>
<dbReference type="Gene3D" id="3.40.640.10">
    <property type="entry name" value="Type I PLP-dependent aspartate aminotransferase-like (Major domain)"/>
    <property type="match status" value="1"/>
</dbReference>
<dbReference type="HAMAP" id="MF_01023">
    <property type="entry name" value="HisC_aminotrans_2"/>
    <property type="match status" value="1"/>
</dbReference>
<dbReference type="InterPro" id="IPR001917">
    <property type="entry name" value="Aminotrans_II_pyridoxalP_BS"/>
</dbReference>
<dbReference type="InterPro" id="IPR004839">
    <property type="entry name" value="Aminotransferase_I/II_large"/>
</dbReference>
<dbReference type="InterPro" id="IPR005861">
    <property type="entry name" value="HisP_aminotrans"/>
</dbReference>
<dbReference type="InterPro" id="IPR015424">
    <property type="entry name" value="PyrdxlP-dep_Trfase"/>
</dbReference>
<dbReference type="InterPro" id="IPR015421">
    <property type="entry name" value="PyrdxlP-dep_Trfase_major"/>
</dbReference>
<dbReference type="InterPro" id="IPR015422">
    <property type="entry name" value="PyrdxlP-dep_Trfase_small"/>
</dbReference>
<dbReference type="NCBIfam" id="TIGR01141">
    <property type="entry name" value="hisC"/>
    <property type="match status" value="1"/>
</dbReference>
<dbReference type="NCBIfam" id="NF002877">
    <property type="entry name" value="PRK03317.1"/>
    <property type="match status" value="1"/>
</dbReference>
<dbReference type="PANTHER" id="PTHR42885:SF2">
    <property type="entry name" value="HISTIDINOL-PHOSPHATE AMINOTRANSFERASE"/>
    <property type="match status" value="1"/>
</dbReference>
<dbReference type="PANTHER" id="PTHR42885">
    <property type="entry name" value="HISTIDINOL-PHOSPHATE AMINOTRANSFERASE-RELATED"/>
    <property type="match status" value="1"/>
</dbReference>
<dbReference type="Pfam" id="PF00155">
    <property type="entry name" value="Aminotran_1_2"/>
    <property type="match status" value="1"/>
</dbReference>
<dbReference type="SUPFAM" id="SSF53383">
    <property type="entry name" value="PLP-dependent transferases"/>
    <property type="match status" value="1"/>
</dbReference>
<dbReference type="PROSITE" id="PS00599">
    <property type="entry name" value="AA_TRANSFER_CLASS_2"/>
    <property type="match status" value="1"/>
</dbReference>
<name>HIS8_MYCBP</name>
<feature type="chain" id="PRO_1000063483" description="Histidinol-phosphate aminotransferase">
    <location>
        <begin position="1"/>
        <end position="380"/>
    </location>
</feature>
<feature type="modified residue" description="N6-(pyridoxal phosphate)lysine" evidence="1">
    <location>
        <position position="232"/>
    </location>
</feature>
<sequence length="380" mass="40581">MTRSGHPVTLDDLPLRADLRGKAPYGAPQLAVPVRLNTNENPHPPTRALVDDVVRSVREAAIDLHRYPDRDAVALRADLAGYLTAQTGIQLGVENIWAANGSNEILQQLLQAFGGPGRSAIGFVPSYSMHPIISDGTHTEWIEASRANDFGLDVDVAVAAVVDRKPDVVFIASPNNPSGQSVSLPDLCKLLDVAPGIAIVDEAYGEFSSQPSAVSLVEEYPSKLVVTRTMSKAFAFAGGRLGYLIATPAVIDAMLLVRLPYHLSSVTQAAARAALRHSDDTLSSVAALIAERERVTTSLNDMGFRVIPSDANFVLFGEFADAPAAWRRYLEAGILIRDVGIPGYLRATTGLAEENDAFLRASARIATDLVPVTRSPVGAP</sequence>
<comment type="catalytic activity">
    <reaction evidence="1">
        <text>L-histidinol phosphate + 2-oxoglutarate = 3-(imidazol-4-yl)-2-oxopropyl phosphate + L-glutamate</text>
        <dbReference type="Rhea" id="RHEA:23744"/>
        <dbReference type="ChEBI" id="CHEBI:16810"/>
        <dbReference type="ChEBI" id="CHEBI:29985"/>
        <dbReference type="ChEBI" id="CHEBI:57766"/>
        <dbReference type="ChEBI" id="CHEBI:57980"/>
        <dbReference type="EC" id="2.6.1.9"/>
    </reaction>
</comment>
<comment type="cofactor">
    <cofactor evidence="1">
        <name>pyridoxal 5'-phosphate</name>
        <dbReference type="ChEBI" id="CHEBI:597326"/>
    </cofactor>
</comment>
<comment type="pathway">
    <text evidence="1">Amino-acid biosynthesis; L-histidine biosynthesis; L-histidine from 5-phospho-alpha-D-ribose 1-diphosphate: step 7/9.</text>
</comment>
<comment type="subunit">
    <text evidence="1">Homodimer.</text>
</comment>
<comment type="similarity">
    <text evidence="1">Belongs to the class-II pyridoxal-phosphate-dependent aminotransferase family. Histidinol-phosphate aminotransferase subfamily.</text>
</comment>
<protein>
    <recommendedName>
        <fullName evidence="1">Histidinol-phosphate aminotransferase</fullName>
        <ecNumber evidence="1">2.6.1.9</ecNumber>
    </recommendedName>
    <alternativeName>
        <fullName evidence="1">Imidazole acetol-phosphate transaminase</fullName>
    </alternativeName>
</protein>
<gene>
    <name evidence="1" type="primary">hisC</name>
    <name type="ordered locus">BCG_1638</name>
</gene>
<organism>
    <name type="scientific">Mycobacterium bovis (strain BCG / Pasteur 1173P2)</name>
    <dbReference type="NCBI Taxonomy" id="410289"/>
    <lineage>
        <taxon>Bacteria</taxon>
        <taxon>Bacillati</taxon>
        <taxon>Actinomycetota</taxon>
        <taxon>Actinomycetes</taxon>
        <taxon>Mycobacteriales</taxon>
        <taxon>Mycobacteriaceae</taxon>
        <taxon>Mycobacterium</taxon>
        <taxon>Mycobacterium tuberculosis complex</taxon>
    </lineage>
</organism>
<evidence type="ECO:0000255" key="1">
    <source>
        <dbReference type="HAMAP-Rule" id="MF_01023"/>
    </source>
</evidence>
<accession>A1KJ16</accession>
<reference key="1">
    <citation type="journal article" date="2007" name="Proc. Natl. Acad. Sci. U.S.A.">
        <title>Genome plasticity of BCG and impact on vaccine efficacy.</title>
        <authorList>
            <person name="Brosch R."/>
            <person name="Gordon S.V."/>
            <person name="Garnier T."/>
            <person name="Eiglmeier K."/>
            <person name="Frigui W."/>
            <person name="Valenti P."/>
            <person name="Dos Santos S."/>
            <person name="Duthoy S."/>
            <person name="Lacroix C."/>
            <person name="Garcia-Pelayo C."/>
            <person name="Inwald J.K."/>
            <person name="Golby P."/>
            <person name="Garcia J.N."/>
            <person name="Hewinson R.G."/>
            <person name="Behr M.A."/>
            <person name="Quail M.A."/>
            <person name="Churcher C."/>
            <person name="Barrell B.G."/>
            <person name="Parkhill J."/>
            <person name="Cole S.T."/>
        </authorList>
    </citation>
    <scope>NUCLEOTIDE SEQUENCE [LARGE SCALE GENOMIC DNA]</scope>
    <source>
        <strain>BCG / Pasteur 1173P2</strain>
    </source>
</reference>
<proteinExistence type="inferred from homology"/>
<keyword id="KW-0028">Amino-acid biosynthesis</keyword>
<keyword id="KW-0032">Aminotransferase</keyword>
<keyword id="KW-0368">Histidine biosynthesis</keyword>
<keyword id="KW-0663">Pyridoxal phosphate</keyword>
<keyword id="KW-0808">Transferase</keyword>